<dbReference type="EMBL" id="BA000021">
    <property type="protein sequence ID" value="BAC24538.1"/>
    <property type="molecule type" value="Genomic_DNA"/>
</dbReference>
<dbReference type="SMR" id="Q8D2G2"/>
<dbReference type="STRING" id="36870.gene:10368892"/>
<dbReference type="KEGG" id="wbr:rpsB"/>
<dbReference type="eggNOG" id="COG0052">
    <property type="taxonomic scope" value="Bacteria"/>
</dbReference>
<dbReference type="HOGENOM" id="CLU_040318_1_2_6"/>
<dbReference type="OrthoDB" id="9808036at2"/>
<dbReference type="Proteomes" id="UP000000562">
    <property type="component" value="Chromosome"/>
</dbReference>
<dbReference type="GO" id="GO:0022627">
    <property type="term" value="C:cytosolic small ribosomal subunit"/>
    <property type="evidence" value="ECO:0007669"/>
    <property type="project" value="TreeGrafter"/>
</dbReference>
<dbReference type="GO" id="GO:0003735">
    <property type="term" value="F:structural constituent of ribosome"/>
    <property type="evidence" value="ECO:0007669"/>
    <property type="project" value="InterPro"/>
</dbReference>
<dbReference type="GO" id="GO:0006412">
    <property type="term" value="P:translation"/>
    <property type="evidence" value="ECO:0007669"/>
    <property type="project" value="UniProtKB-UniRule"/>
</dbReference>
<dbReference type="CDD" id="cd01425">
    <property type="entry name" value="RPS2"/>
    <property type="match status" value="1"/>
</dbReference>
<dbReference type="FunFam" id="1.10.287.610:FF:000001">
    <property type="entry name" value="30S ribosomal protein S2"/>
    <property type="match status" value="1"/>
</dbReference>
<dbReference type="Gene3D" id="3.40.50.10490">
    <property type="entry name" value="Glucose-6-phosphate isomerase like protein, domain 1"/>
    <property type="match status" value="1"/>
</dbReference>
<dbReference type="Gene3D" id="1.10.287.610">
    <property type="entry name" value="Helix hairpin bin"/>
    <property type="match status" value="1"/>
</dbReference>
<dbReference type="HAMAP" id="MF_00291_B">
    <property type="entry name" value="Ribosomal_uS2_B"/>
    <property type="match status" value="1"/>
</dbReference>
<dbReference type="InterPro" id="IPR001865">
    <property type="entry name" value="Ribosomal_uS2"/>
</dbReference>
<dbReference type="InterPro" id="IPR005706">
    <property type="entry name" value="Ribosomal_uS2_bac/mit/plastid"/>
</dbReference>
<dbReference type="InterPro" id="IPR018130">
    <property type="entry name" value="Ribosomal_uS2_CS"/>
</dbReference>
<dbReference type="InterPro" id="IPR023591">
    <property type="entry name" value="Ribosomal_uS2_flav_dom_sf"/>
</dbReference>
<dbReference type="NCBIfam" id="TIGR01011">
    <property type="entry name" value="rpsB_bact"/>
    <property type="match status" value="1"/>
</dbReference>
<dbReference type="PANTHER" id="PTHR12534">
    <property type="entry name" value="30S RIBOSOMAL PROTEIN S2 PROKARYOTIC AND ORGANELLAR"/>
    <property type="match status" value="1"/>
</dbReference>
<dbReference type="PANTHER" id="PTHR12534:SF0">
    <property type="entry name" value="SMALL RIBOSOMAL SUBUNIT PROTEIN US2M"/>
    <property type="match status" value="1"/>
</dbReference>
<dbReference type="Pfam" id="PF00318">
    <property type="entry name" value="Ribosomal_S2"/>
    <property type="match status" value="1"/>
</dbReference>
<dbReference type="PRINTS" id="PR00395">
    <property type="entry name" value="RIBOSOMALS2"/>
</dbReference>
<dbReference type="SUPFAM" id="SSF52313">
    <property type="entry name" value="Ribosomal protein S2"/>
    <property type="match status" value="1"/>
</dbReference>
<dbReference type="PROSITE" id="PS00962">
    <property type="entry name" value="RIBOSOMAL_S2_1"/>
    <property type="match status" value="1"/>
</dbReference>
<dbReference type="PROSITE" id="PS00963">
    <property type="entry name" value="RIBOSOMAL_S2_2"/>
    <property type="match status" value="1"/>
</dbReference>
<organism>
    <name type="scientific">Wigglesworthia glossinidia brevipalpis</name>
    <dbReference type="NCBI Taxonomy" id="36870"/>
    <lineage>
        <taxon>Bacteria</taxon>
        <taxon>Pseudomonadati</taxon>
        <taxon>Pseudomonadota</taxon>
        <taxon>Gammaproteobacteria</taxon>
        <taxon>Enterobacterales</taxon>
        <taxon>Erwiniaceae</taxon>
        <taxon>Wigglesworthia</taxon>
    </lineage>
</organism>
<evidence type="ECO:0000255" key="1">
    <source>
        <dbReference type="HAMAP-Rule" id="MF_00291"/>
    </source>
</evidence>
<evidence type="ECO:0000305" key="2"/>
<accession>Q8D2G2</accession>
<reference key="1">
    <citation type="journal article" date="2002" name="Nat. Genet.">
        <title>Genome sequence of the endocellular obligate symbiont of tsetse flies, Wigglesworthia glossinidia.</title>
        <authorList>
            <person name="Akman L."/>
            <person name="Yamashita A."/>
            <person name="Watanabe H."/>
            <person name="Oshima K."/>
            <person name="Shiba T."/>
            <person name="Hattori M."/>
            <person name="Aksoy S."/>
        </authorList>
    </citation>
    <scope>NUCLEOTIDE SEQUENCE [LARGE SCALE GENOMIC DNA]</scope>
</reference>
<keyword id="KW-1185">Reference proteome</keyword>
<keyword id="KW-0687">Ribonucleoprotein</keyword>
<keyword id="KW-0689">Ribosomal protein</keyword>
<feature type="chain" id="PRO_0000134275" description="Small ribosomal subunit protein uS2">
    <location>
        <begin position="1"/>
        <end position="240"/>
    </location>
</feature>
<protein>
    <recommendedName>
        <fullName evidence="1">Small ribosomal subunit protein uS2</fullName>
    </recommendedName>
    <alternativeName>
        <fullName evidence="2">30S ribosomal protein S2</fullName>
    </alternativeName>
</protein>
<sequence length="240" mass="27399">MLNLSMKDMIQSGVHFGHQTRYWNPNMKPFIFCKKNKVHIINLEKTLIMFEIAMNELSKISKRDGKILFIGTKRAASEAIKNSAINCNQFFVNYRWLGGMLTNWKTVRQSIKRLKELESQSKDGTFKKLTKKEALIRTRTLNKLENSLGGIKNMGGLPDAIFVIDVEHEKTSIKEANKLGIPIFAIVDTNSNPKDIKFVIPGNDDSIRAIDLYLKTVSETIKNSKISNKEINKKIIIKNN</sequence>
<proteinExistence type="inferred from homology"/>
<name>RS2_WIGBR</name>
<gene>
    <name evidence="1" type="primary">rpsB</name>
    <name type="ordered locus">WIGBR3920</name>
</gene>
<comment type="similarity">
    <text evidence="1">Belongs to the universal ribosomal protein uS2 family.</text>
</comment>